<organism>
    <name type="scientific">Methanobrevibacter smithii (strain ATCC 35061 / DSM 861 / OCM 144 / PS)</name>
    <dbReference type="NCBI Taxonomy" id="420247"/>
    <lineage>
        <taxon>Archaea</taxon>
        <taxon>Methanobacteriati</taxon>
        <taxon>Methanobacteriota</taxon>
        <taxon>Methanomada group</taxon>
        <taxon>Methanobacteria</taxon>
        <taxon>Methanobacteriales</taxon>
        <taxon>Methanobacteriaceae</taxon>
        <taxon>Methanobrevibacter</taxon>
    </lineage>
</organism>
<reference key="1">
    <citation type="journal article" date="2007" name="Proc. Natl. Acad. Sci. U.S.A.">
        <title>Genomic and metabolic adaptations of Methanobrevibacter smithii to the human gut.</title>
        <authorList>
            <person name="Samuel B.S."/>
            <person name="Hansen E.E."/>
            <person name="Manchester J.K."/>
            <person name="Coutinho P.M."/>
            <person name="Henrissat B."/>
            <person name="Fulton R."/>
            <person name="Latreille P."/>
            <person name="Kim K."/>
            <person name="Wilson R.K."/>
            <person name="Gordon J.I."/>
        </authorList>
    </citation>
    <scope>NUCLEOTIDE SEQUENCE [LARGE SCALE GENOMIC DNA]</scope>
    <source>
        <strain>ATCC 35061 / DSM 861 / OCM 144 / PS</strain>
    </source>
</reference>
<evidence type="ECO:0000255" key="1">
    <source>
        <dbReference type="HAMAP-Rule" id="MF_00204"/>
    </source>
</evidence>
<feature type="chain" id="PRO_1000077904" description="UvrABC system protein B">
    <location>
        <begin position="1"/>
        <end position="655"/>
    </location>
</feature>
<feature type="domain" description="Helicase ATP-binding" evidence="1">
    <location>
        <begin position="25"/>
        <end position="181"/>
    </location>
</feature>
<feature type="domain" description="Helicase C-terminal" evidence="1">
    <location>
        <begin position="428"/>
        <end position="590"/>
    </location>
</feature>
<feature type="domain" description="UVR" evidence="1">
    <location>
        <begin position="615"/>
        <end position="650"/>
    </location>
</feature>
<feature type="short sequence motif" description="Beta-hairpin">
    <location>
        <begin position="91"/>
        <end position="114"/>
    </location>
</feature>
<feature type="binding site" evidence="1">
    <location>
        <begin position="38"/>
        <end position="45"/>
    </location>
    <ligand>
        <name>ATP</name>
        <dbReference type="ChEBI" id="CHEBI:30616"/>
    </ligand>
</feature>
<keyword id="KW-0067">ATP-binding</keyword>
<keyword id="KW-0963">Cytoplasm</keyword>
<keyword id="KW-0227">DNA damage</keyword>
<keyword id="KW-0228">DNA excision</keyword>
<keyword id="KW-0234">DNA repair</keyword>
<keyword id="KW-0267">Excision nuclease</keyword>
<keyword id="KW-0347">Helicase</keyword>
<keyword id="KW-0378">Hydrolase</keyword>
<keyword id="KW-0547">Nucleotide-binding</keyword>
<keyword id="KW-0742">SOS response</keyword>
<dbReference type="EMBL" id="CP000678">
    <property type="protein sequence ID" value="ABQ87784.1"/>
    <property type="molecule type" value="Genomic_DNA"/>
</dbReference>
<dbReference type="RefSeq" id="WP_011954604.1">
    <property type="nucleotide sequence ID" value="NZ_CP117965.1"/>
</dbReference>
<dbReference type="SMR" id="A5UNK6"/>
<dbReference type="STRING" id="420247.Msm_1579"/>
<dbReference type="EnsemblBacteria" id="ABQ87784">
    <property type="protein sequence ID" value="ABQ87784"/>
    <property type="gene ID" value="Msm_1579"/>
</dbReference>
<dbReference type="GeneID" id="78818220"/>
<dbReference type="KEGG" id="msi:Msm_1579"/>
<dbReference type="PATRIC" id="fig|420247.28.peg.1569"/>
<dbReference type="eggNOG" id="arCOG04748">
    <property type="taxonomic scope" value="Archaea"/>
</dbReference>
<dbReference type="HOGENOM" id="CLU_009621_2_1_2"/>
<dbReference type="Proteomes" id="UP000001992">
    <property type="component" value="Chromosome"/>
</dbReference>
<dbReference type="GO" id="GO:0005737">
    <property type="term" value="C:cytoplasm"/>
    <property type="evidence" value="ECO:0007669"/>
    <property type="project" value="UniProtKB-SubCell"/>
</dbReference>
<dbReference type="GO" id="GO:0009380">
    <property type="term" value="C:excinuclease repair complex"/>
    <property type="evidence" value="ECO:0007669"/>
    <property type="project" value="InterPro"/>
</dbReference>
<dbReference type="GO" id="GO:0005524">
    <property type="term" value="F:ATP binding"/>
    <property type="evidence" value="ECO:0007669"/>
    <property type="project" value="UniProtKB-UniRule"/>
</dbReference>
<dbReference type="GO" id="GO:0016887">
    <property type="term" value="F:ATP hydrolysis activity"/>
    <property type="evidence" value="ECO:0007669"/>
    <property type="project" value="InterPro"/>
</dbReference>
<dbReference type="GO" id="GO:0003677">
    <property type="term" value="F:DNA binding"/>
    <property type="evidence" value="ECO:0007669"/>
    <property type="project" value="UniProtKB-UniRule"/>
</dbReference>
<dbReference type="GO" id="GO:0009381">
    <property type="term" value="F:excinuclease ABC activity"/>
    <property type="evidence" value="ECO:0007669"/>
    <property type="project" value="UniProtKB-UniRule"/>
</dbReference>
<dbReference type="GO" id="GO:0004386">
    <property type="term" value="F:helicase activity"/>
    <property type="evidence" value="ECO:0007669"/>
    <property type="project" value="UniProtKB-KW"/>
</dbReference>
<dbReference type="GO" id="GO:0006289">
    <property type="term" value="P:nucleotide-excision repair"/>
    <property type="evidence" value="ECO:0007669"/>
    <property type="project" value="UniProtKB-UniRule"/>
</dbReference>
<dbReference type="GO" id="GO:0009432">
    <property type="term" value="P:SOS response"/>
    <property type="evidence" value="ECO:0007669"/>
    <property type="project" value="UniProtKB-UniRule"/>
</dbReference>
<dbReference type="CDD" id="cd17916">
    <property type="entry name" value="DEXHc_UvrB"/>
    <property type="match status" value="1"/>
</dbReference>
<dbReference type="CDD" id="cd18790">
    <property type="entry name" value="SF2_C_UvrB"/>
    <property type="match status" value="1"/>
</dbReference>
<dbReference type="Gene3D" id="3.40.50.300">
    <property type="entry name" value="P-loop containing nucleotide triphosphate hydrolases"/>
    <property type="match status" value="3"/>
</dbReference>
<dbReference type="Gene3D" id="4.10.860.10">
    <property type="entry name" value="UVR domain"/>
    <property type="match status" value="1"/>
</dbReference>
<dbReference type="HAMAP" id="MF_00204">
    <property type="entry name" value="UvrB"/>
    <property type="match status" value="1"/>
</dbReference>
<dbReference type="InterPro" id="IPR006935">
    <property type="entry name" value="Helicase/UvrB_N"/>
</dbReference>
<dbReference type="InterPro" id="IPR014001">
    <property type="entry name" value="Helicase_ATP-bd"/>
</dbReference>
<dbReference type="InterPro" id="IPR001650">
    <property type="entry name" value="Helicase_C-like"/>
</dbReference>
<dbReference type="InterPro" id="IPR027417">
    <property type="entry name" value="P-loop_NTPase"/>
</dbReference>
<dbReference type="InterPro" id="IPR001943">
    <property type="entry name" value="UVR_dom"/>
</dbReference>
<dbReference type="InterPro" id="IPR036876">
    <property type="entry name" value="UVR_dom_sf"/>
</dbReference>
<dbReference type="InterPro" id="IPR004807">
    <property type="entry name" value="UvrB"/>
</dbReference>
<dbReference type="InterPro" id="IPR041471">
    <property type="entry name" value="UvrB_inter"/>
</dbReference>
<dbReference type="InterPro" id="IPR024759">
    <property type="entry name" value="UvrB_YAD/RRR_dom"/>
</dbReference>
<dbReference type="NCBIfam" id="NF003673">
    <property type="entry name" value="PRK05298.1"/>
    <property type="match status" value="1"/>
</dbReference>
<dbReference type="NCBIfam" id="TIGR00631">
    <property type="entry name" value="uvrb"/>
    <property type="match status" value="1"/>
</dbReference>
<dbReference type="PANTHER" id="PTHR24029">
    <property type="entry name" value="UVRABC SYSTEM PROTEIN B"/>
    <property type="match status" value="1"/>
</dbReference>
<dbReference type="PANTHER" id="PTHR24029:SF0">
    <property type="entry name" value="UVRABC SYSTEM PROTEIN B"/>
    <property type="match status" value="1"/>
</dbReference>
<dbReference type="Pfam" id="PF00271">
    <property type="entry name" value="Helicase_C"/>
    <property type="match status" value="1"/>
</dbReference>
<dbReference type="Pfam" id="PF04851">
    <property type="entry name" value="ResIII"/>
    <property type="match status" value="1"/>
</dbReference>
<dbReference type="Pfam" id="PF02151">
    <property type="entry name" value="UVR"/>
    <property type="match status" value="1"/>
</dbReference>
<dbReference type="Pfam" id="PF12344">
    <property type="entry name" value="UvrB"/>
    <property type="match status" value="1"/>
</dbReference>
<dbReference type="Pfam" id="PF17757">
    <property type="entry name" value="UvrB_inter"/>
    <property type="match status" value="1"/>
</dbReference>
<dbReference type="SMART" id="SM00487">
    <property type="entry name" value="DEXDc"/>
    <property type="match status" value="1"/>
</dbReference>
<dbReference type="SMART" id="SM00490">
    <property type="entry name" value="HELICc"/>
    <property type="match status" value="1"/>
</dbReference>
<dbReference type="SUPFAM" id="SSF46600">
    <property type="entry name" value="C-terminal UvrC-binding domain of UvrB"/>
    <property type="match status" value="1"/>
</dbReference>
<dbReference type="SUPFAM" id="SSF52540">
    <property type="entry name" value="P-loop containing nucleoside triphosphate hydrolases"/>
    <property type="match status" value="2"/>
</dbReference>
<dbReference type="PROSITE" id="PS51192">
    <property type="entry name" value="HELICASE_ATP_BIND_1"/>
    <property type="match status" value="1"/>
</dbReference>
<dbReference type="PROSITE" id="PS51194">
    <property type="entry name" value="HELICASE_CTER"/>
    <property type="match status" value="1"/>
</dbReference>
<dbReference type="PROSITE" id="PS50151">
    <property type="entry name" value="UVR"/>
    <property type="match status" value="1"/>
</dbReference>
<accession>A5UNK6</accession>
<sequence>MKKFKLNSPYKPLGDQPKAINSLVDGINKGEKEQTLLGVTGSGKTFTMANVIEKVQKPTLVISHNKTLAAQLYEEFKEFFPDNAVEYFVSYYDYYQPEAYVPRTDTFIDKESSVNEEIDIMRHSATQSLLSRDDVIVVSSVSCIYGIGSPEDYGEFAFGIAVGDNYDRSDIIRKLVFMQYERNDIEFARGHFRVRGDVIEINPVHGTPPVRVELFGDEIDAISLIDKVTGKKTESLKRYMIFPAKHFVVGQDKMDTAIRNISDELDERLNEFNLSNKLLEAQRLEQRTRFDIEMLQEMGYCPGVENYSMHLSGRKWGEKPYSLLKYFPEDYLTIIDESHVTLPQIRGMYNGDRARKETLVEHGFRLPSAKENRPLRFDEFESSINQIIYVSATPGAYELSRSSNIVEQIIRPTGLVDPEVIIRPVKGQVEDLLGEVKKRAKKDERVLVTTLTKKMAEDLTDYYAKIGVKVRYMHSEIDTLERIDIVDDLRRGTFDVLVGVNLLREGLDLPEVSLVAILDADKEGFLRNETSLIQTIGRAARNINGQVIMYVDEMTDSVKNATAITSKRRKIQIKYNEKHGIVPKTTKRALKDKKVAEDLDIEGTDISKIPKDELRLLISDLENDMKEAAAKLDFERAASLRDQIATLKGLKKDSS</sequence>
<comment type="function">
    <text evidence="1">The UvrABC repair system catalyzes the recognition and processing of DNA lesions. A damage recognition complex composed of 2 UvrA and 2 UvrB subunits scans DNA for abnormalities. Upon binding of the UvrA(2)B(2) complex to a putative damaged site, the DNA wraps around one UvrB monomer. DNA wrap is dependent on ATP binding by UvrB and probably causes local melting of the DNA helix, facilitating insertion of UvrB beta-hairpin between the DNA strands. Then UvrB probes one DNA strand for the presence of a lesion. If a lesion is found the UvrA subunits dissociate and the UvrB-DNA preincision complex is formed. This complex is subsequently bound by UvrC and the second UvrB is released. If no lesion is found, the DNA wraps around the other UvrB subunit that will check the other stand for damage.</text>
</comment>
<comment type="subunit">
    <text evidence="1">Forms a heterotetramer with UvrA during the search for lesions. Interacts with UvrC in an incision complex.</text>
</comment>
<comment type="subcellular location">
    <subcellularLocation>
        <location evidence="1">Cytoplasm</location>
    </subcellularLocation>
</comment>
<comment type="domain">
    <text evidence="1">The beta-hairpin motif is involved in DNA binding.</text>
</comment>
<comment type="similarity">
    <text evidence="1">Belongs to the UvrB family.</text>
</comment>
<protein>
    <recommendedName>
        <fullName evidence="1">UvrABC system protein B</fullName>
        <shortName evidence="1">Protein UvrB</shortName>
    </recommendedName>
    <alternativeName>
        <fullName evidence="1">Excinuclease ABC subunit B</fullName>
    </alternativeName>
</protein>
<name>UVRB_METS3</name>
<gene>
    <name evidence="1" type="primary">uvrB</name>
    <name type="ordered locus">Msm_1579</name>
</gene>
<proteinExistence type="inferred from homology"/>